<gene>
    <name type="primary">M2A</name>
</gene>
<keyword id="KW-0002">3D-structure</keyword>
<keyword id="KW-0903">Direct protein sequencing</keyword>
<keyword id="KW-1015">Disulfide bond</keyword>
<keyword id="KW-0964">Secreted</keyword>
<keyword id="KW-0732">Signal</keyword>
<keyword id="KW-0800">Toxin</keyword>
<dbReference type="EMBL" id="L12226">
    <property type="protein sequence ID" value="AAA89185.1"/>
    <property type="molecule type" value="Genomic_RNA"/>
</dbReference>
<dbReference type="EMBL" id="U25179">
    <property type="protein sequence ID" value="AAA75041.1"/>
    <property type="molecule type" value="Genomic_RNA"/>
</dbReference>
<dbReference type="PIR" id="S40034">
    <property type="entry name" value="S40034"/>
</dbReference>
<dbReference type="PDB" id="1KPT">
    <property type="method" value="X-ray"/>
    <property type="resolution" value="1.75 A"/>
    <property type="chains" value="A/B=23-127"/>
</dbReference>
<dbReference type="PDBsum" id="1KPT"/>
<dbReference type="SMR" id="Q90121"/>
<dbReference type="EvolutionaryTrace" id="Q90121"/>
<dbReference type="GO" id="GO:0005576">
    <property type="term" value="C:extracellular region"/>
    <property type="evidence" value="ECO:0007669"/>
    <property type="project" value="UniProtKB-SubCell"/>
</dbReference>
<dbReference type="GO" id="GO:0090729">
    <property type="term" value="F:toxin activity"/>
    <property type="evidence" value="ECO:0007669"/>
    <property type="project" value="UniProtKB-KW"/>
</dbReference>
<dbReference type="Gene3D" id="3.30.430.10">
    <property type="entry name" value="Killer Toxin P4, subunit A"/>
    <property type="match status" value="1"/>
</dbReference>
<dbReference type="InterPro" id="IPR015131">
    <property type="entry name" value="Killer_tox_Kp4"/>
</dbReference>
<dbReference type="InterPro" id="IPR011329">
    <property type="entry name" value="Killer_tox_Kp4/SMK"/>
</dbReference>
<dbReference type="Pfam" id="PF09044">
    <property type="entry name" value="Kp4"/>
    <property type="match status" value="1"/>
</dbReference>
<dbReference type="SUPFAM" id="SSF55221">
    <property type="entry name" value="Yeast killer toxins"/>
    <property type="match status" value="1"/>
</dbReference>
<feature type="signal peptide" evidence="2 3">
    <location>
        <begin position="1"/>
        <end position="22"/>
    </location>
</feature>
<feature type="chain" id="PRO_0000041338" description="KP4 killer toxin">
    <location>
        <begin position="23"/>
        <end position="127"/>
    </location>
</feature>
<feature type="disulfide bond">
    <location>
        <begin position="27"/>
        <end position="100"/>
    </location>
</feature>
<feature type="disulfide bond">
    <location>
        <begin position="33"/>
        <end position="103"/>
    </location>
</feature>
<feature type="disulfide bond">
    <location>
        <begin position="49"/>
        <end position="89"/>
    </location>
</feature>
<feature type="disulfide bond">
    <location>
        <begin position="57"/>
        <end position="82"/>
    </location>
</feature>
<feature type="disulfide bond">
    <location>
        <begin position="66"/>
        <end position="127"/>
    </location>
</feature>
<feature type="sequence conflict" description="In Ref. 1; AA sequence." evidence="4" ref="1">
    <original>W</original>
    <variation>I</variation>
    <location>
        <position position="56"/>
    </location>
</feature>
<feature type="sequence conflict" description="In Ref. 1; AA sequence." evidence="4" ref="1">
    <original>C</original>
    <variation>E</variation>
    <location>
        <position position="66"/>
    </location>
</feature>
<feature type="sequence conflict" description="In Ref. 1; AA sequence." evidence="4" ref="1">
    <original>G</original>
    <variation>C</variation>
    <location>
        <position position="67"/>
    </location>
</feature>
<feature type="sequence conflict" description="In Ref. 1; AA sequence." evidence="4" ref="1">
    <original>S</original>
    <variation>D</variation>
    <location>
        <position position="73"/>
    </location>
</feature>
<feature type="sequence conflict" description="In Ref. 1; AA sequence." evidence="4" ref="1">
    <original>A</original>
    <variation>H</variation>
    <location>
        <position position="74"/>
    </location>
</feature>
<feature type="sequence conflict" description="In Ref. 1; AA sequence." evidence="4" ref="1">
    <original>T</original>
    <variation>S</variation>
    <location>
        <position position="79"/>
    </location>
</feature>
<feature type="helix" evidence="6">
    <location>
        <begin position="31"/>
        <end position="35"/>
    </location>
</feature>
<feature type="helix" evidence="6">
    <location>
        <begin position="40"/>
        <end position="50"/>
    </location>
</feature>
<feature type="strand" evidence="6">
    <location>
        <begin position="54"/>
        <end position="56"/>
    </location>
</feature>
<feature type="strand" evidence="6">
    <location>
        <begin position="63"/>
        <end position="66"/>
    </location>
</feature>
<feature type="strand" evidence="6">
    <location>
        <begin position="71"/>
        <end position="80"/>
    </location>
</feature>
<feature type="helix" evidence="6">
    <location>
        <begin position="85"/>
        <end position="98"/>
    </location>
</feature>
<feature type="strand" evidence="6">
    <location>
        <begin position="104"/>
        <end position="109"/>
    </location>
</feature>
<feature type="helix" evidence="6">
    <location>
        <begin position="114"/>
        <end position="116"/>
    </location>
</feature>
<feature type="strand" evidence="6">
    <location>
        <begin position="118"/>
        <end position="125"/>
    </location>
</feature>
<name>KP4T_UMV4</name>
<protein>
    <recommendedName>
        <fullName>KP4 killer toxin</fullName>
    </recommendedName>
    <alternativeName>
        <fullName>Fungal toxin KP4</fullName>
    </alternativeName>
    <alternativeName>
        <fullName>Killer protein 4</fullName>
    </alternativeName>
</protein>
<sequence>MQIINVVYSFLFAAAMLPVVHSLGINCRGSSQCGLSGGNLMVRIRDQACGNQGQTWCPGERRAKVCGTGNSISAYVQSTNNCISGTEACRHLTNLVNHGCRVCGSDPLYAGNDVSRGQLTVNYVNSC</sequence>
<comment type="function">
    <text evidence="1">This protein is lethal to sensitive cells of the same or related species. It specifically inhibits voltage-gated calcium channels. It inhibits cell growth and division by blocking calcium import.</text>
</comment>
<comment type="subunit">
    <text>Monomer.</text>
</comment>
<comment type="subcellular location">
    <subcellularLocation>
        <location>Secreted</location>
    </subcellularLocation>
</comment>
<comment type="mass spectrometry"/>
<comment type="biotechnology">
    <text>The KP4 toxin expressed in transgenic plant can render them resistant to KP4-susceptible fungal pathogens such as grass smut fungi. Successful tests have been made in tobacco and wheat.</text>
</comment>
<comment type="caution">
    <text evidence="5">Was originally thought to be glycosylated, but this does not seem to be the case according to PubMed:8145639.</text>
</comment>
<accession>Q90121</accession>
<organismHost>
    <name type="scientific">Mycosarcoma maydis</name>
    <name type="common">Corn smut fungus</name>
    <name type="synonym">Ustilago maydis</name>
    <dbReference type="NCBI Taxonomy" id="5270"/>
</organismHost>
<evidence type="ECO:0000269" key="1">
    <source>
    </source>
</evidence>
<evidence type="ECO:0000269" key="2">
    <source>
    </source>
</evidence>
<evidence type="ECO:0000269" key="3">
    <source>
    </source>
</evidence>
<evidence type="ECO:0000305" key="4"/>
<evidence type="ECO:0000305" key="5">
    <source>
    </source>
</evidence>
<evidence type="ECO:0007829" key="6">
    <source>
        <dbReference type="PDB" id="1KPT"/>
    </source>
</evidence>
<reference key="1">
    <citation type="journal article" date="1994" name="Mol. Microbiol.">
        <title>Structure and heterologous expression of the Ustilago maydis viral toxin KP4.</title>
        <authorList>
            <person name="Park C.-M."/>
            <person name="Bruenn J.A."/>
            <person name="Ganesa C."/>
            <person name="Flurkey W.F."/>
            <person name="Bozarth R.F."/>
            <person name="Koltin Y."/>
        </authorList>
    </citation>
    <scope>NUCLEOTIDE SEQUENCE [GENOMIC RNA]</scope>
    <scope>PROTEIN SEQUENCE OF 23-79 AND 124-127</scope>
    <scope>MASS SPECTROMETRY</scope>
    <source>
        <strain>77</strain>
    </source>
</reference>
<reference key="2">
    <citation type="submission" date="1995-09" db="EMBL/GenBank/DDBJ databases">
        <authorList>
            <person name="Gu F."/>
            <person name="Khimani A.K."/>
            <person name="Flurkey W.F."/>
            <person name="Bozarth R.F."/>
            <person name="Smith T.J."/>
            <person name="Rane S."/>
        </authorList>
    </citation>
    <scope>NUCLEOTIDE SEQUENCE [GENOMIC RNA]</scope>
    <source>
        <strain>M2B</strain>
    </source>
</reference>
<reference key="3">
    <citation type="journal article" date="1991" name="Arch. Biochem. Biophys.">
        <title>Ustilago maydis virus P4 killer toxin: characterization, partial amino terminus sequence, and evidence for glycosylation.</title>
        <authorList>
            <person name="Ganesa C."/>
            <person name="Flurkey W.H."/>
            <person name="Randhawa Z.I."/>
            <person name="Bozarth R.F."/>
        </authorList>
    </citation>
    <scope>CHARACTERIZATION</scope>
    <scope>PROTEIN SEQUENCE OF 23-52</scope>
</reference>
<reference key="4">
    <citation type="journal article" date="2001" name="Mol. Microbiol.">
        <title>KP4 fungal toxin inhibits growth in Ustilago maydis by blocking calcium uptake.</title>
        <authorList>
            <person name="Gage M.J."/>
            <person name="Bruenn J."/>
            <person name="Fischer M."/>
            <person name="Sanders D."/>
            <person name="Smith T.J."/>
        </authorList>
    </citation>
    <scope>FUNCTION</scope>
</reference>
<reference key="5">
    <citation type="journal article" date="1995" name="Structure">
        <title>Structure and function of a virally encoded fungal toxin from Ustilago maydis: a fungal and mammalian Ca2+ channel inhibitor.</title>
        <authorList>
            <person name="Gu F."/>
            <person name="Khimani A."/>
            <person name="Rane S.G."/>
            <person name="Flurkey W.H."/>
            <person name="Bozarth R.F."/>
            <person name="Smith T.J."/>
        </authorList>
    </citation>
    <scope>X-RAY CRYSTALLOGRAPHY (1.9 ANGSTROMS)</scope>
</reference>
<organism>
    <name type="scientific">Ustilago maydis P4 virus</name>
    <name type="common">UmV4</name>
    <name type="synonym">UmV-P4</name>
    <dbReference type="NCBI Taxonomy" id="11009"/>
    <lineage>
        <taxon>Viruses</taxon>
        <taxon>Riboviria</taxon>
        <taxon>Orthornavirae</taxon>
        <taxon>Duplornaviricota</taxon>
        <taxon>Chrymotiviricetes</taxon>
        <taxon>Ghabrivirales</taxon>
        <taxon>Totiviridae</taxon>
        <taxon>Totivirus</taxon>
    </lineage>
</organism>
<proteinExistence type="evidence at protein level"/>